<organism>
    <name type="scientific">Penicillium digitatum</name>
    <name type="common">Green mold</name>
    <dbReference type="NCBI Taxonomy" id="36651"/>
    <lineage>
        <taxon>Eukaryota</taxon>
        <taxon>Fungi</taxon>
        <taxon>Dikarya</taxon>
        <taxon>Ascomycota</taxon>
        <taxon>Pezizomycotina</taxon>
        <taxon>Eurotiomycetes</taxon>
        <taxon>Eurotiomycetidae</taxon>
        <taxon>Eurotiales</taxon>
        <taxon>Aspergillaceae</taxon>
        <taxon>Penicillium</taxon>
    </lineage>
</organism>
<accession>Q9Y718</accession>
<reference key="1">
    <citation type="submission" date="1998-06" db="EMBL/GenBank/DDBJ databases">
        <title>Polygalacturonase encoding gene of Penicillium digitatum.</title>
        <authorList>
            <person name="Arimoto Y."/>
            <person name="Arie T."/>
            <person name="Yamaguchi I."/>
        </authorList>
    </citation>
    <scope>NUCLEOTIDE SEQUENCE [GENOMIC DNA]</scope>
    <source>
        <strain>JCM 9863</strain>
    </source>
</reference>
<evidence type="ECO:0000250" key="1">
    <source>
        <dbReference type="UniProtKB" id="O74213"/>
    </source>
</evidence>
<evidence type="ECO:0000255" key="2"/>
<evidence type="ECO:0000255" key="3">
    <source>
        <dbReference type="PROSITE-ProRule" id="PRU00498"/>
    </source>
</evidence>
<evidence type="ECO:0000255" key="4">
    <source>
        <dbReference type="PROSITE-ProRule" id="PRU10052"/>
    </source>
</evidence>
<evidence type="ECO:0000305" key="5"/>
<gene>
    <name type="primary">PG1</name>
</gene>
<name>PGLR_PENDI</name>
<proteinExistence type="inferred from homology"/>
<comment type="catalytic activity">
    <reaction>
        <text>(1,4-alpha-D-galacturonosyl)n+m + H2O = (1,4-alpha-D-galacturonosyl)n + (1,4-alpha-D-galacturonosyl)m.</text>
        <dbReference type="EC" id="3.2.1.15"/>
    </reaction>
</comment>
<comment type="subcellular location">
    <subcellularLocation>
        <location evidence="5">Secreted</location>
    </subcellularLocation>
</comment>
<comment type="similarity">
    <text evidence="5">Belongs to the glycosyl hydrolase 28 family.</text>
</comment>
<feature type="signal peptide" evidence="2">
    <location>
        <begin position="1"/>
        <end position="18"/>
    </location>
</feature>
<feature type="chain" id="PRO_0000024787" description="Polygalacturonase">
    <location>
        <begin position="19"/>
        <end position="367"/>
    </location>
</feature>
<feature type="repeat" description="PbH1 1" evidence="2">
    <location>
        <begin position="161"/>
        <end position="191"/>
    </location>
</feature>
<feature type="repeat" description="PbH1 2" evidence="2">
    <location>
        <begin position="192"/>
        <end position="213"/>
    </location>
</feature>
<feature type="repeat" description="PbH1 3" evidence="2">
    <location>
        <begin position="214"/>
        <end position="234"/>
    </location>
</feature>
<feature type="repeat" description="PbH1 4" evidence="2">
    <location>
        <begin position="243"/>
        <end position="264"/>
    </location>
</feature>
<feature type="repeat" description="PbH1 5" evidence="2">
    <location>
        <begin position="272"/>
        <end position="294"/>
    </location>
</feature>
<feature type="active site" description="Proton donor" evidence="1">
    <location>
        <position position="206"/>
    </location>
</feature>
<feature type="active site" evidence="4">
    <location>
        <position position="228"/>
    </location>
</feature>
<feature type="glycosylation site" description="N-linked (GlcNAc...) asparagine" evidence="3">
    <location>
        <position position="318"/>
    </location>
</feature>
<feature type="glycosylation site" description="N-linked (GlcNAc...) asparagine" evidence="3">
    <location>
        <position position="336"/>
    </location>
</feature>
<feature type="disulfide bond" evidence="1">
    <location>
        <begin position="34"/>
        <end position="49"/>
    </location>
</feature>
<feature type="disulfide bond" evidence="1">
    <location>
        <begin position="208"/>
        <end position="224"/>
    </location>
</feature>
<feature type="disulfide bond" evidence="1">
    <location>
        <begin position="334"/>
        <end position="339"/>
    </location>
</feature>
<feature type="disulfide bond" evidence="1">
    <location>
        <begin position="358"/>
        <end position="367"/>
    </location>
</feature>
<dbReference type="EC" id="3.2.1.15"/>
<dbReference type="EMBL" id="AB015286">
    <property type="protein sequence ID" value="BAA77297.1"/>
    <property type="molecule type" value="Genomic_DNA"/>
</dbReference>
<dbReference type="SMR" id="Q9Y718"/>
<dbReference type="CAZy" id="GH28">
    <property type="family name" value="Glycoside Hydrolase Family 28"/>
</dbReference>
<dbReference type="GlyCosmos" id="Q9Y718">
    <property type="glycosylation" value="2 sites, No reported glycans"/>
</dbReference>
<dbReference type="KEGG" id="pdp:PDIP_64460"/>
<dbReference type="VEuPathDB" id="FungiDB:PDIP_64460"/>
<dbReference type="GO" id="GO:0005576">
    <property type="term" value="C:extracellular region"/>
    <property type="evidence" value="ECO:0007669"/>
    <property type="project" value="UniProtKB-SubCell"/>
</dbReference>
<dbReference type="GO" id="GO:0004650">
    <property type="term" value="F:polygalacturonase activity"/>
    <property type="evidence" value="ECO:0007669"/>
    <property type="project" value="UniProtKB-EC"/>
</dbReference>
<dbReference type="GO" id="GO:0071555">
    <property type="term" value="P:cell wall organization"/>
    <property type="evidence" value="ECO:0007669"/>
    <property type="project" value="UniProtKB-KW"/>
</dbReference>
<dbReference type="GO" id="GO:0045490">
    <property type="term" value="P:pectin catabolic process"/>
    <property type="evidence" value="ECO:0007669"/>
    <property type="project" value="UniProtKB-ARBA"/>
</dbReference>
<dbReference type="FunFam" id="2.160.20.10:FF:000002">
    <property type="entry name" value="Endopolygalacturonase D"/>
    <property type="match status" value="1"/>
</dbReference>
<dbReference type="Gene3D" id="2.160.20.10">
    <property type="entry name" value="Single-stranded right-handed beta-helix, Pectin lyase-like"/>
    <property type="match status" value="1"/>
</dbReference>
<dbReference type="InterPro" id="IPR000743">
    <property type="entry name" value="Glyco_hydro_28"/>
</dbReference>
<dbReference type="InterPro" id="IPR050434">
    <property type="entry name" value="Glycosyl_hydrlase_28"/>
</dbReference>
<dbReference type="InterPro" id="IPR006626">
    <property type="entry name" value="PbH1"/>
</dbReference>
<dbReference type="InterPro" id="IPR012334">
    <property type="entry name" value="Pectin_lyas_fold"/>
</dbReference>
<dbReference type="InterPro" id="IPR011050">
    <property type="entry name" value="Pectin_lyase_fold/virulence"/>
</dbReference>
<dbReference type="PANTHER" id="PTHR31884:SF13">
    <property type="entry name" value="ENDOPOLYGALACTURONASE B"/>
    <property type="match status" value="1"/>
</dbReference>
<dbReference type="PANTHER" id="PTHR31884">
    <property type="entry name" value="POLYGALACTURONASE"/>
    <property type="match status" value="1"/>
</dbReference>
<dbReference type="Pfam" id="PF00295">
    <property type="entry name" value="Glyco_hydro_28"/>
    <property type="match status" value="1"/>
</dbReference>
<dbReference type="SMART" id="SM00710">
    <property type="entry name" value="PbH1"/>
    <property type="match status" value="5"/>
</dbReference>
<dbReference type="SUPFAM" id="SSF51126">
    <property type="entry name" value="Pectin lyase-like"/>
    <property type="match status" value="1"/>
</dbReference>
<dbReference type="PROSITE" id="PS00502">
    <property type="entry name" value="POLYGALACTURONASE"/>
    <property type="match status" value="1"/>
</dbReference>
<keyword id="KW-0961">Cell wall biogenesis/degradation</keyword>
<keyword id="KW-1015">Disulfide bond</keyword>
<keyword id="KW-0325">Glycoprotein</keyword>
<keyword id="KW-0326">Glycosidase</keyword>
<keyword id="KW-0378">Hydrolase</keyword>
<keyword id="KW-0677">Repeat</keyword>
<keyword id="KW-0964">Secreted</keyword>
<keyword id="KW-0732">Signal</keyword>
<protein>
    <recommendedName>
        <fullName>Polygalacturonase</fullName>
        <shortName>PG</shortName>
        <ecNumber>3.2.1.15</ecNumber>
    </recommendedName>
    <alternativeName>
        <fullName>Pectinase</fullName>
    </alternativeName>
</protein>
<sequence>MRTSFVTMLALGAAAVSAAPAAPVTDLVERGSSCTFTTAEAAKAGKGSCSTIVLDNIKVPAGETLDLTKLKSGTQVVFKGETSFGYKEWTGPLVSFSGSNIHVSGAAGHVINGGGPSWWDGKGTNGGKKKPKFFYAHHLDDSTISGLNVKNTPVQGFSILADRLTLDHITIDNSEGDAKGGHNTDAFDVGSSTFITISNANIKNQDDCLAINSGSNIKFVGGTCSGGHGISIGSVGLRDNNIVKDVTISDSTVINSDNGVRVKTIYQATGAVSGVTFSNIKLSNIAKYGIVIEQDYENGSPTGKPTNGVPISELTIENVTGTLKSSATEVYILCGNGSCKNWKWAGNSLSGGKKSGKCGNVPAGASC</sequence>